<comment type="function">
    <text evidence="1">Located on the platform of the 30S subunit, it bridges several disparate RNA helices of the 16S rRNA. Forms part of the Shine-Dalgarno cleft in the 70S ribosome.</text>
</comment>
<comment type="subunit">
    <text evidence="1">Part of the 30S ribosomal subunit. Interacts with proteins S7 and S18. Binds to IF-3.</text>
</comment>
<comment type="similarity">
    <text evidence="1">Belongs to the universal ribosomal protein uS11 family.</text>
</comment>
<name>RS11_ACTP7</name>
<evidence type="ECO:0000255" key="1">
    <source>
        <dbReference type="HAMAP-Rule" id="MF_01310"/>
    </source>
</evidence>
<evidence type="ECO:0000305" key="2"/>
<dbReference type="EMBL" id="CP001091">
    <property type="protein sequence ID" value="ACE62520.1"/>
    <property type="molecule type" value="Genomic_DNA"/>
</dbReference>
<dbReference type="RefSeq" id="WP_005599323.1">
    <property type="nucleotide sequence ID" value="NC_010939.1"/>
</dbReference>
<dbReference type="SMR" id="B3GZ34"/>
<dbReference type="GeneID" id="92743632"/>
<dbReference type="KEGG" id="apa:APP7_1868"/>
<dbReference type="HOGENOM" id="CLU_072439_5_0_6"/>
<dbReference type="Proteomes" id="UP000001226">
    <property type="component" value="Chromosome"/>
</dbReference>
<dbReference type="GO" id="GO:1990904">
    <property type="term" value="C:ribonucleoprotein complex"/>
    <property type="evidence" value="ECO:0007669"/>
    <property type="project" value="UniProtKB-KW"/>
</dbReference>
<dbReference type="GO" id="GO:0005840">
    <property type="term" value="C:ribosome"/>
    <property type="evidence" value="ECO:0007669"/>
    <property type="project" value="UniProtKB-KW"/>
</dbReference>
<dbReference type="GO" id="GO:0019843">
    <property type="term" value="F:rRNA binding"/>
    <property type="evidence" value="ECO:0007669"/>
    <property type="project" value="UniProtKB-UniRule"/>
</dbReference>
<dbReference type="GO" id="GO:0003735">
    <property type="term" value="F:structural constituent of ribosome"/>
    <property type="evidence" value="ECO:0007669"/>
    <property type="project" value="InterPro"/>
</dbReference>
<dbReference type="GO" id="GO:0006412">
    <property type="term" value="P:translation"/>
    <property type="evidence" value="ECO:0007669"/>
    <property type="project" value="UniProtKB-UniRule"/>
</dbReference>
<dbReference type="FunFam" id="3.30.420.80:FF:000001">
    <property type="entry name" value="30S ribosomal protein S11"/>
    <property type="match status" value="1"/>
</dbReference>
<dbReference type="Gene3D" id="3.30.420.80">
    <property type="entry name" value="Ribosomal protein S11"/>
    <property type="match status" value="1"/>
</dbReference>
<dbReference type="HAMAP" id="MF_01310">
    <property type="entry name" value="Ribosomal_uS11"/>
    <property type="match status" value="1"/>
</dbReference>
<dbReference type="InterPro" id="IPR001971">
    <property type="entry name" value="Ribosomal_uS11"/>
</dbReference>
<dbReference type="InterPro" id="IPR019981">
    <property type="entry name" value="Ribosomal_uS11_bac-type"/>
</dbReference>
<dbReference type="InterPro" id="IPR018102">
    <property type="entry name" value="Ribosomal_uS11_CS"/>
</dbReference>
<dbReference type="InterPro" id="IPR036967">
    <property type="entry name" value="Ribosomal_uS11_sf"/>
</dbReference>
<dbReference type="NCBIfam" id="NF003698">
    <property type="entry name" value="PRK05309.1"/>
    <property type="match status" value="1"/>
</dbReference>
<dbReference type="NCBIfam" id="TIGR03632">
    <property type="entry name" value="uS11_bact"/>
    <property type="match status" value="1"/>
</dbReference>
<dbReference type="PANTHER" id="PTHR11759">
    <property type="entry name" value="40S RIBOSOMAL PROTEIN S14/30S RIBOSOMAL PROTEIN S11"/>
    <property type="match status" value="1"/>
</dbReference>
<dbReference type="Pfam" id="PF00411">
    <property type="entry name" value="Ribosomal_S11"/>
    <property type="match status" value="1"/>
</dbReference>
<dbReference type="PIRSF" id="PIRSF002131">
    <property type="entry name" value="Ribosomal_S11"/>
    <property type="match status" value="1"/>
</dbReference>
<dbReference type="SUPFAM" id="SSF53137">
    <property type="entry name" value="Translational machinery components"/>
    <property type="match status" value="1"/>
</dbReference>
<dbReference type="PROSITE" id="PS00054">
    <property type="entry name" value="RIBOSOMAL_S11"/>
    <property type="match status" value="1"/>
</dbReference>
<sequence length="129" mass="13843">MAKTPVRARKRVKKQIADGVAHIHASFNNTIVTITDRQGNALAWATAGGSGFRGSRKSTPFAAQVAAERCAEAVKEFGLKNLEVMVKGPGPGRESTIRALNAAGFRITNITDVTPIPHNGCRPPKKRRV</sequence>
<reference key="1">
    <citation type="submission" date="2008-06" db="EMBL/GenBank/DDBJ databases">
        <title>Genome and proteome analysis of A. pleuropneumoniae serotype 7.</title>
        <authorList>
            <person name="Linke B."/>
            <person name="Buettner F."/>
            <person name="Martinez-Arias R."/>
            <person name="Goesmann A."/>
            <person name="Baltes N."/>
            <person name="Tegetmeyer H."/>
            <person name="Singh M."/>
            <person name="Gerlach G.F."/>
        </authorList>
    </citation>
    <scope>NUCLEOTIDE SEQUENCE [LARGE SCALE GENOMIC DNA]</scope>
    <source>
        <strain>AP76</strain>
    </source>
</reference>
<feature type="chain" id="PRO_1000141045" description="Small ribosomal subunit protein uS11">
    <location>
        <begin position="1"/>
        <end position="129"/>
    </location>
</feature>
<organism>
    <name type="scientific">Actinobacillus pleuropneumoniae serotype 7 (strain AP76)</name>
    <dbReference type="NCBI Taxonomy" id="537457"/>
    <lineage>
        <taxon>Bacteria</taxon>
        <taxon>Pseudomonadati</taxon>
        <taxon>Pseudomonadota</taxon>
        <taxon>Gammaproteobacteria</taxon>
        <taxon>Pasteurellales</taxon>
        <taxon>Pasteurellaceae</taxon>
        <taxon>Actinobacillus</taxon>
    </lineage>
</organism>
<protein>
    <recommendedName>
        <fullName evidence="1">Small ribosomal subunit protein uS11</fullName>
    </recommendedName>
    <alternativeName>
        <fullName evidence="2">30S ribosomal protein S11</fullName>
    </alternativeName>
</protein>
<proteinExistence type="inferred from homology"/>
<gene>
    <name evidence="1" type="primary">rpsK</name>
    <name type="ordered locus">APP7_1868</name>
</gene>
<accession>B3GZ34</accession>
<keyword id="KW-0687">Ribonucleoprotein</keyword>
<keyword id="KW-0689">Ribosomal protein</keyword>
<keyword id="KW-0694">RNA-binding</keyword>
<keyword id="KW-0699">rRNA-binding</keyword>